<protein>
    <recommendedName>
        <fullName evidence="2">Large ribosomal subunit protein eL13</fullName>
    </recommendedName>
    <alternativeName>
        <fullName>60S ribosomal protein L13</fullName>
    </alternativeName>
</protein>
<name>RL13_BOVIN</name>
<reference key="1">
    <citation type="submission" date="2005-01" db="EMBL/GenBank/DDBJ databases">
        <title>Analysis of sequences obtained from constructed full-length bovine cDNA libraries.</title>
        <authorList>
            <person name="Yu J."/>
            <person name="Meng Y."/>
            <person name="Wang Z."/>
            <person name="Hansen C."/>
            <person name="Li C."/>
            <person name="Moore S.S."/>
        </authorList>
    </citation>
    <scope>NUCLEOTIDE SEQUENCE [LARGE SCALE MRNA]</scope>
    <source>
        <tissue>Lymphoid epithelium</tissue>
    </source>
</reference>
<keyword id="KW-0007">Acetylation</keyword>
<keyword id="KW-0963">Cytoplasm</keyword>
<keyword id="KW-1017">Isopeptide bond</keyword>
<keyword id="KW-0597">Phosphoprotein</keyword>
<keyword id="KW-1185">Reference proteome</keyword>
<keyword id="KW-0687">Ribonucleoprotein</keyword>
<keyword id="KW-0689">Ribosomal protein</keyword>
<keyword id="KW-0832">Ubl conjugation</keyword>
<comment type="function">
    <text evidence="1">Component of the ribosome, a large ribonucleoprotein complex responsible for the synthesis of proteins in the cell. The small ribosomal subunit (SSU) binds messenger RNAs (mRNAs) and translates the encoded message by selecting cognate aminoacyl-transfer RNA (tRNA) molecules. The large subunit (LSU) contains the ribosomal catalytic site termed the peptidyl transferase center (PTC), which catalyzes the formation of peptide bonds, thereby polymerizing the amino acids delivered by tRNAs into a polypeptide chain. The nascent polypeptides leave the ribosome through a tunnel in the LSU and interact with protein factors that function in enzymatic processing, targeting, and the membrane insertion of nascent chains at the exit of the ribosomal tunnel. As part of the LSU, it is probably required for its formation and the maturation of rRNAs. Plays a role in bone development.</text>
</comment>
<comment type="subunit">
    <text evidence="1">Component of the 60S large ribosomal subunit (LSU).</text>
</comment>
<comment type="subcellular location">
    <subcellularLocation>
        <location evidence="1">Cytoplasm</location>
    </subcellularLocation>
</comment>
<comment type="similarity">
    <text evidence="2">Belongs to the eukaryotic ribosomal protein eL13 family.</text>
</comment>
<proteinExistence type="evidence at transcript level"/>
<accession>Q56JZ1</accession>
<gene>
    <name type="primary">RPL13</name>
</gene>
<organism>
    <name type="scientific">Bos taurus</name>
    <name type="common">Bovine</name>
    <dbReference type="NCBI Taxonomy" id="9913"/>
    <lineage>
        <taxon>Eukaryota</taxon>
        <taxon>Metazoa</taxon>
        <taxon>Chordata</taxon>
        <taxon>Craniata</taxon>
        <taxon>Vertebrata</taxon>
        <taxon>Euteleostomi</taxon>
        <taxon>Mammalia</taxon>
        <taxon>Eutheria</taxon>
        <taxon>Laurasiatheria</taxon>
        <taxon>Artiodactyla</taxon>
        <taxon>Ruminantia</taxon>
        <taxon>Pecora</taxon>
        <taxon>Bovidae</taxon>
        <taxon>Bovinae</taxon>
        <taxon>Bos</taxon>
    </lineage>
</organism>
<dbReference type="EMBL" id="AY911336">
    <property type="protein sequence ID" value="AAW82104.1"/>
    <property type="molecule type" value="mRNA"/>
</dbReference>
<dbReference type="RefSeq" id="NP_001015543.1">
    <property type="nucleotide sequence ID" value="NM_001015543.2"/>
</dbReference>
<dbReference type="SMR" id="Q56JZ1"/>
<dbReference type="FunCoup" id="Q56JZ1">
    <property type="interactions" value="2630"/>
</dbReference>
<dbReference type="STRING" id="9913.ENSBTAP00000044536"/>
<dbReference type="PaxDb" id="9913-ENSBTAP00000044536"/>
<dbReference type="PeptideAtlas" id="Q56JZ1"/>
<dbReference type="GeneID" id="508221"/>
<dbReference type="KEGG" id="bta:508221"/>
<dbReference type="CTD" id="6137"/>
<dbReference type="eggNOG" id="KOG3295">
    <property type="taxonomic scope" value="Eukaryota"/>
</dbReference>
<dbReference type="InParanoid" id="Q56JZ1"/>
<dbReference type="OrthoDB" id="10264538at2759"/>
<dbReference type="Proteomes" id="UP000009136">
    <property type="component" value="Unplaced"/>
</dbReference>
<dbReference type="GO" id="GO:0005829">
    <property type="term" value="C:cytosol"/>
    <property type="evidence" value="ECO:0000250"/>
    <property type="project" value="UniProtKB"/>
</dbReference>
<dbReference type="GO" id="GO:0022625">
    <property type="term" value="C:cytosolic large ribosomal subunit"/>
    <property type="evidence" value="ECO:0000318"/>
    <property type="project" value="GO_Central"/>
</dbReference>
<dbReference type="GO" id="GO:0003723">
    <property type="term" value="F:RNA binding"/>
    <property type="evidence" value="ECO:0000318"/>
    <property type="project" value="GO_Central"/>
</dbReference>
<dbReference type="GO" id="GO:0003735">
    <property type="term" value="F:structural constituent of ribosome"/>
    <property type="evidence" value="ECO:0000318"/>
    <property type="project" value="GO_Central"/>
</dbReference>
<dbReference type="GO" id="GO:0006412">
    <property type="term" value="P:translation"/>
    <property type="evidence" value="ECO:0007669"/>
    <property type="project" value="InterPro"/>
</dbReference>
<dbReference type="FunFam" id="1.20.5.110:FF:000003">
    <property type="entry name" value="60S ribosomal protein L13"/>
    <property type="match status" value="1"/>
</dbReference>
<dbReference type="Gene3D" id="1.20.5.110">
    <property type="match status" value="1"/>
</dbReference>
<dbReference type="HAMAP" id="MF_00499">
    <property type="entry name" value="Ribosomal_eL13"/>
    <property type="match status" value="1"/>
</dbReference>
<dbReference type="InterPro" id="IPR001380">
    <property type="entry name" value="Ribosomal_eL13"/>
</dbReference>
<dbReference type="InterPro" id="IPR018256">
    <property type="entry name" value="Ribosomal_eL13_CS"/>
</dbReference>
<dbReference type="PANTHER" id="PTHR11722">
    <property type="entry name" value="60S RIBOSOMAL PROTEIN L13"/>
    <property type="match status" value="1"/>
</dbReference>
<dbReference type="PANTHER" id="PTHR11722:SF0">
    <property type="entry name" value="LARGE RIBOSOMAL SUBUNIT PROTEIN EL13"/>
    <property type="match status" value="1"/>
</dbReference>
<dbReference type="Pfam" id="PF01294">
    <property type="entry name" value="Ribosomal_L13e"/>
    <property type="match status" value="1"/>
</dbReference>
<dbReference type="PROSITE" id="PS01104">
    <property type="entry name" value="RIBOSOMAL_L13E"/>
    <property type="match status" value="1"/>
</dbReference>
<evidence type="ECO:0000250" key="1">
    <source>
        <dbReference type="UniProtKB" id="P26373"/>
    </source>
</evidence>
<evidence type="ECO:0000305" key="2"/>
<sequence>MAPSRNGMILKPHFHKDWQRRVATWFNQPARKIRRRKARQAKARRIAPRPASGPLRPVVRCPTVRYHTKVRAGRGFSLEELRVAGIHKKVARTIGISVDPRRRNKCTESLQANVQRLKEYRSKLILFPRKPSAPKKGDSSAEELKLATQLTGPVMPIRNVYKKEKARVITEEEKNFKAFASLRMARANARLFGIRAKRAKEAAEQDVEKKK</sequence>
<feature type="chain" id="PRO_0000231000" description="Large ribosomal subunit protein eL13">
    <location>
        <begin position="1"/>
        <end position="211"/>
    </location>
</feature>
<feature type="modified residue" description="N6-acetyllysine" evidence="1">
    <location>
        <position position="16"/>
    </location>
</feature>
<feature type="modified residue" description="Phosphoserine" evidence="1">
    <location>
        <position position="52"/>
    </location>
</feature>
<feature type="modified residue" description="Phosphoserine" evidence="1">
    <location>
        <position position="77"/>
    </location>
</feature>
<feature type="modified residue" description="N6-acetyllysine; alternate" evidence="1">
    <location>
        <position position="177"/>
    </location>
</feature>
<feature type="cross-link" description="Glycyl lysine isopeptide (Lys-Gly) (interchain with G-Cter in SUMO2)" evidence="1">
    <location>
        <position position="123"/>
    </location>
</feature>
<feature type="cross-link" description="Glycyl lysine isopeptide (Lys-Gly) (interchain with G-Cter in SUMO2)" evidence="1">
    <location>
        <position position="145"/>
    </location>
</feature>
<feature type="cross-link" description="Glycyl lysine isopeptide (Lys-Gly) (interchain with G-Cter in SUMO1); alternate" evidence="1">
    <location>
        <position position="174"/>
    </location>
</feature>
<feature type="cross-link" description="Glycyl lysine isopeptide (Lys-Gly) (interchain with G-Cter in SUMO2); alternate" evidence="1">
    <location>
        <position position="174"/>
    </location>
</feature>
<feature type="cross-link" description="Glycyl lysine isopeptide (Lys-Gly) (interchain with G-Cter in SUMO2); alternate" evidence="1">
    <location>
        <position position="177"/>
    </location>
</feature>